<sequence>MATGKIVQIIGAVVDVEFPQSDVPSVYDALNVKDSKERLVLEVQQQLGGGVVRCIVMGSSDGLRRGVEVVNTGAPISVPVGTKTLGRIMNVLGDAIDERGEIGAEELYSIHRPAPSYEEQSNATELLETGVKVIDLICPFAKGGKIGLFGGAGVGKTVNMMELINNIALQHSGLSVFAGVGERTREGNDFYHEMQEAGVVNIEKPEESKVAMVYGQMNEPPGNRLRVALTGLTMAERFRDEGRDVLLFVDNIYRYTLAGTEVSALLGRMPSAVGYQPTLAEEMGVLQERITSTKQGSITSVQAVYVPADDLTDPSPATTFAHLDATVVLNRNIAAMGLYPAIDPLDSTSRQLDPLVVGQEHYDTARGVQQTLQRYKELKDIIAILGMDELSESDKQVVARARKIERFLTQPYHVAEVFTGDPGVYVPLKETLRGFKGLLAGEYDDIPEQAFMYCGTIDEAIENAKKL</sequence>
<accession>Q7MGI0</accession>
<evidence type="ECO:0000255" key="1">
    <source>
        <dbReference type="HAMAP-Rule" id="MF_01347"/>
    </source>
</evidence>
<keyword id="KW-0066">ATP synthesis</keyword>
<keyword id="KW-0067">ATP-binding</keyword>
<keyword id="KW-0997">Cell inner membrane</keyword>
<keyword id="KW-1003">Cell membrane</keyword>
<keyword id="KW-0139">CF(1)</keyword>
<keyword id="KW-0375">Hydrogen ion transport</keyword>
<keyword id="KW-0406">Ion transport</keyword>
<keyword id="KW-0472">Membrane</keyword>
<keyword id="KW-0547">Nucleotide-binding</keyword>
<keyword id="KW-1278">Translocase</keyword>
<keyword id="KW-0813">Transport</keyword>
<reference key="1">
    <citation type="journal article" date="2003" name="Genome Res.">
        <title>Comparative genome analysis of Vibrio vulnificus, a marine pathogen.</title>
        <authorList>
            <person name="Chen C.-Y."/>
            <person name="Wu K.-M."/>
            <person name="Chang Y.-C."/>
            <person name="Chang C.-H."/>
            <person name="Tsai H.-C."/>
            <person name="Liao T.-L."/>
            <person name="Liu Y.-M."/>
            <person name="Chen H.-J."/>
            <person name="Shen A.B.-T."/>
            <person name="Li J.-C."/>
            <person name="Su T.-L."/>
            <person name="Shao C.-P."/>
            <person name="Lee C.-T."/>
            <person name="Hor L.-I."/>
            <person name="Tsai S.-F."/>
        </authorList>
    </citation>
    <scope>NUCLEOTIDE SEQUENCE [LARGE SCALE GENOMIC DNA]</scope>
    <source>
        <strain>YJ016</strain>
    </source>
</reference>
<protein>
    <recommendedName>
        <fullName evidence="1">ATP synthase subunit beta</fullName>
        <ecNumber evidence="1">7.1.2.2</ecNumber>
    </recommendedName>
    <alternativeName>
        <fullName evidence="1">ATP synthase F1 sector subunit beta</fullName>
    </alternativeName>
    <alternativeName>
        <fullName evidence="1">F-ATPase subunit beta</fullName>
    </alternativeName>
</protein>
<proteinExistence type="inferred from homology"/>
<feature type="chain" id="PRO_0000254423" description="ATP synthase subunit beta">
    <location>
        <begin position="1"/>
        <end position="467"/>
    </location>
</feature>
<feature type="binding site" evidence="1">
    <location>
        <begin position="150"/>
        <end position="157"/>
    </location>
    <ligand>
        <name>ATP</name>
        <dbReference type="ChEBI" id="CHEBI:30616"/>
    </ligand>
</feature>
<comment type="function">
    <text evidence="1">Produces ATP from ADP in the presence of a proton gradient across the membrane. The catalytic sites are hosted primarily by the beta subunits.</text>
</comment>
<comment type="catalytic activity">
    <reaction evidence="1">
        <text>ATP + H2O + 4 H(+)(in) = ADP + phosphate + 5 H(+)(out)</text>
        <dbReference type="Rhea" id="RHEA:57720"/>
        <dbReference type="ChEBI" id="CHEBI:15377"/>
        <dbReference type="ChEBI" id="CHEBI:15378"/>
        <dbReference type="ChEBI" id="CHEBI:30616"/>
        <dbReference type="ChEBI" id="CHEBI:43474"/>
        <dbReference type="ChEBI" id="CHEBI:456216"/>
        <dbReference type="EC" id="7.1.2.2"/>
    </reaction>
</comment>
<comment type="subunit">
    <text evidence="1">F-type ATPases have 2 components, CF(1) - the catalytic core - and CF(0) - the membrane proton channel. CF(1) has five subunits: alpha(3), beta(3), gamma(1), delta(1), epsilon(1). CF(0) has three main subunits: a(1), b(2) and c(9-12). The alpha and beta chains form an alternating ring which encloses part of the gamma chain. CF(1) is attached to CF(0) by a central stalk formed by the gamma and epsilon chains, while a peripheral stalk is formed by the delta and b chains.</text>
</comment>
<comment type="subcellular location">
    <subcellularLocation>
        <location evidence="1">Cell inner membrane</location>
        <topology evidence="1">Peripheral membrane protein</topology>
    </subcellularLocation>
</comment>
<comment type="similarity">
    <text evidence="1">Belongs to the ATPase alpha/beta chains family.</text>
</comment>
<gene>
    <name evidence="1" type="primary">atpD</name>
    <name type="ordered locus">VV3251</name>
</gene>
<dbReference type="EC" id="7.1.2.2" evidence="1"/>
<dbReference type="EMBL" id="BA000037">
    <property type="protein sequence ID" value="BAC96015.1"/>
    <property type="molecule type" value="Genomic_DNA"/>
</dbReference>
<dbReference type="RefSeq" id="WP_011079055.1">
    <property type="nucleotide sequence ID" value="NC_005139.1"/>
</dbReference>
<dbReference type="SMR" id="Q7MGI0"/>
<dbReference type="STRING" id="672.VV93_v1c29730"/>
<dbReference type="GeneID" id="93895310"/>
<dbReference type="KEGG" id="vvy:VV3251"/>
<dbReference type="eggNOG" id="COG0055">
    <property type="taxonomic scope" value="Bacteria"/>
</dbReference>
<dbReference type="HOGENOM" id="CLU_022398_0_2_6"/>
<dbReference type="Proteomes" id="UP000002675">
    <property type="component" value="Chromosome I"/>
</dbReference>
<dbReference type="GO" id="GO:0005886">
    <property type="term" value="C:plasma membrane"/>
    <property type="evidence" value="ECO:0007669"/>
    <property type="project" value="UniProtKB-SubCell"/>
</dbReference>
<dbReference type="GO" id="GO:0045259">
    <property type="term" value="C:proton-transporting ATP synthase complex"/>
    <property type="evidence" value="ECO:0007669"/>
    <property type="project" value="UniProtKB-KW"/>
</dbReference>
<dbReference type="GO" id="GO:0005524">
    <property type="term" value="F:ATP binding"/>
    <property type="evidence" value="ECO:0007669"/>
    <property type="project" value="UniProtKB-UniRule"/>
</dbReference>
<dbReference type="GO" id="GO:0016887">
    <property type="term" value="F:ATP hydrolysis activity"/>
    <property type="evidence" value="ECO:0007669"/>
    <property type="project" value="InterPro"/>
</dbReference>
<dbReference type="GO" id="GO:0046933">
    <property type="term" value="F:proton-transporting ATP synthase activity, rotational mechanism"/>
    <property type="evidence" value="ECO:0007669"/>
    <property type="project" value="UniProtKB-UniRule"/>
</dbReference>
<dbReference type="CDD" id="cd18110">
    <property type="entry name" value="ATP-synt_F1_beta_C"/>
    <property type="match status" value="1"/>
</dbReference>
<dbReference type="CDD" id="cd18115">
    <property type="entry name" value="ATP-synt_F1_beta_N"/>
    <property type="match status" value="1"/>
</dbReference>
<dbReference type="CDD" id="cd01133">
    <property type="entry name" value="F1-ATPase_beta_CD"/>
    <property type="match status" value="1"/>
</dbReference>
<dbReference type="FunFam" id="1.10.1140.10:FF:000001">
    <property type="entry name" value="ATP synthase subunit beta"/>
    <property type="match status" value="1"/>
</dbReference>
<dbReference type="FunFam" id="2.40.10.170:FF:000003">
    <property type="entry name" value="ATP synthase subunit beta"/>
    <property type="match status" value="1"/>
</dbReference>
<dbReference type="FunFam" id="3.40.50.300:FF:000004">
    <property type="entry name" value="ATP synthase subunit beta"/>
    <property type="match status" value="1"/>
</dbReference>
<dbReference type="Gene3D" id="2.40.10.170">
    <property type="match status" value="1"/>
</dbReference>
<dbReference type="Gene3D" id="1.10.1140.10">
    <property type="entry name" value="Bovine Mitochondrial F1-atpase, Atp Synthase Beta Chain, Chain D, domain 3"/>
    <property type="match status" value="1"/>
</dbReference>
<dbReference type="Gene3D" id="3.40.50.300">
    <property type="entry name" value="P-loop containing nucleotide triphosphate hydrolases"/>
    <property type="match status" value="1"/>
</dbReference>
<dbReference type="HAMAP" id="MF_01347">
    <property type="entry name" value="ATP_synth_beta_bact"/>
    <property type="match status" value="1"/>
</dbReference>
<dbReference type="InterPro" id="IPR003593">
    <property type="entry name" value="AAA+_ATPase"/>
</dbReference>
<dbReference type="InterPro" id="IPR055190">
    <property type="entry name" value="ATP-synt_VA_C"/>
</dbReference>
<dbReference type="InterPro" id="IPR005722">
    <property type="entry name" value="ATP_synth_F1_bsu"/>
</dbReference>
<dbReference type="InterPro" id="IPR020003">
    <property type="entry name" value="ATPase_a/bsu_AS"/>
</dbReference>
<dbReference type="InterPro" id="IPR050053">
    <property type="entry name" value="ATPase_alpha/beta_chains"/>
</dbReference>
<dbReference type="InterPro" id="IPR004100">
    <property type="entry name" value="ATPase_F1/V1/A1_a/bsu_N"/>
</dbReference>
<dbReference type="InterPro" id="IPR036121">
    <property type="entry name" value="ATPase_F1/V1/A1_a/bsu_N_sf"/>
</dbReference>
<dbReference type="InterPro" id="IPR000194">
    <property type="entry name" value="ATPase_F1/V1/A1_a/bsu_nucl-bd"/>
</dbReference>
<dbReference type="InterPro" id="IPR024034">
    <property type="entry name" value="ATPase_F1/V1_b/a_C"/>
</dbReference>
<dbReference type="InterPro" id="IPR027417">
    <property type="entry name" value="P-loop_NTPase"/>
</dbReference>
<dbReference type="NCBIfam" id="TIGR01039">
    <property type="entry name" value="atpD"/>
    <property type="match status" value="1"/>
</dbReference>
<dbReference type="PANTHER" id="PTHR15184">
    <property type="entry name" value="ATP SYNTHASE"/>
    <property type="match status" value="1"/>
</dbReference>
<dbReference type="PANTHER" id="PTHR15184:SF71">
    <property type="entry name" value="ATP SYNTHASE SUBUNIT BETA, MITOCHONDRIAL"/>
    <property type="match status" value="1"/>
</dbReference>
<dbReference type="Pfam" id="PF00006">
    <property type="entry name" value="ATP-synt_ab"/>
    <property type="match status" value="1"/>
</dbReference>
<dbReference type="Pfam" id="PF02874">
    <property type="entry name" value="ATP-synt_ab_N"/>
    <property type="match status" value="1"/>
</dbReference>
<dbReference type="Pfam" id="PF22919">
    <property type="entry name" value="ATP-synt_VA_C"/>
    <property type="match status" value="1"/>
</dbReference>
<dbReference type="SMART" id="SM00382">
    <property type="entry name" value="AAA"/>
    <property type="match status" value="1"/>
</dbReference>
<dbReference type="SUPFAM" id="SSF47917">
    <property type="entry name" value="C-terminal domain of alpha and beta subunits of F1 ATP synthase"/>
    <property type="match status" value="1"/>
</dbReference>
<dbReference type="SUPFAM" id="SSF50615">
    <property type="entry name" value="N-terminal domain of alpha and beta subunits of F1 ATP synthase"/>
    <property type="match status" value="1"/>
</dbReference>
<dbReference type="SUPFAM" id="SSF52540">
    <property type="entry name" value="P-loop containing nucleoside triphosphate hydrolases"/>
    <property type="match status" value="1"/>
</dbReference>
<dbReference type="PROSITE" id="PS00152">
    <property type="entry name" value="ATPASE_ALPHA_BETA"/>
    <property type="match status" value="1"/>
</dbReference>
<organism>
    <name type="scientific">Vibrio vulnificus (strain YJ016)</name>
    <dbReference type="NCBI Taxonomy" id="196600"/>
    <lineage>
        <taxon>Bacteria</taxon>
        <taxon>Pseudomonadati</taxon>
        <taxon>Pseudomonadota</taxon>
        <taxon>Gammaproteobacteria</taxon>
        <taxon>Vibrionales</taxon>
        <taxon>Vibrionaceae</taxon>
        <taxon>Vibrio</taxon>
    </lineage>
</organism>
<name>ATPB_VIBVY</name>